<reference key="1">
    <citation type="journal article" date="1997" name="Nature">
        <title>The complete genome sequence of the hyperthermophilic, sulphate-reducing archaeon Archaeoglobus fulgidus.</title>
        <authorList>
            <person name="Klenk H.-P."/>
            <person name="Clayton R.A."/>
            <person name="Tomb J.-F."/>
            <person name="White O."/>
            <person name="Nelson K.E."/>
            <person name="Ketchum K.A."/>
            <person name="Dodson R.J."/>
            <person name="Gwinn M.L."/>
            <person name="Hickey E.K."/>
            <person name="Peterson J.D."/>
            <person name="Richardson D.L."/>
            <person name="Kerlavage A.R."/>
            <person name="Graham D.E."/>
            <person name="Kyrpides N.C."/>
            <person name="Fleischmann R.D."/>
            <person name="Quackenbush J."/>
            <person name="Lee N.H."/>
            <person name="Sutton G.G."/>
            <person name="Gill S.R."/>
            <person name="Kirkness E.F."/>
            <person name="Dougherty B.A."/>
            <person name="McKenney K."/>
            <person name="Adams M.D."/>
            <person name="Loftus B.J."/>
            <person name="Peterson S.N."/>
            <person name="Reich C.I."/>
            <person name="McNeil L.K."/>
            <person name="Badger J.H."/>
            <person name="Glodek A."/>
            <person name="Zhou L."/>
            <person name="Overbeek R."/>
            <person name="Gocayne J.D."/>
            <person name="Weidman J.F."/>
            <person name="McDonald L.A."/>
            <person name="Utterback T.R."/>
            <person name="Cotton M.D."/>
            <person name="Spriggs T."/>
            <person name="Artiach P."/>
            <person name="Kaine B.P."/>
            <person name="Sykes S.M."/>
            <person name="Sadow P.W."/>
            <person name="D'Andrea K.P."/>
            <person name="Bowman C."/>
            <person name="Fujii C."/>
            <person name="Garland S.A."/>
            <person name="Mason T.M."/>
            <person name="Olsen G.J."/>
            <person name="Fraser C.M."/>
            <person name="Smith H.O."/>
            <person name="Woese C.R."/>
            <person name="Venter J.C."/>
        </authorList>
    </citation>
    <scope>NUCLEOTIDE SEQUENCE [LARGE SCALE GENOMIC DNA]</scope>
    <source>
        <strain>ATCC 49558 / DSM 4304 / JCM 9628 / NBRC 100126 / VC-16</strain>
    </source>
</reference>
<keyword id="KW-0235">DNA replication</keyword>
<keyword id="KW-0238">DNA-binding</keyword>
<keyword id="KW-0239">DNA-directed DNA polymerase</keyword>
<keyword id="KW-0548">Nucleotidyltransferase</keyword>
<keyword id="KW-1185">Reference proteome</keyword>
<keyword id="KW-0808">Transferase</keyword>
<feature type="chain" id="PRO_0000046476" description="DNA polymerase">
    <location>
        <begin position="1"/>
        <end position="781"/>
    </location>
</feature>
<sequence length="781" mass="89851">MERVEGWLIDADYETIGGKAVVRLWCKDDQGIFVAYDYNFDPYFYVIGVDEDILKNAATSTRREVIKLKSFEKAQLKTLGREVEGYIVYAHHPQHVPKLRDYLSQFGDVREADIPFAYRYLIDKDLACMDGIAIEGEKQGGVIRSYKIEKVERIPRMEFPELKMLVFDCEMLSSFGMPEPEKDPIIVISVKTNDDDEIILTGDERKIISDFVKLIKSYDPDIIVGYNQDAFDWPYLRKRAERWNIPLDVGRDGSNVVFRGGRPKITGRLNVDLYDIAMRISDIKIKKLENVAEFLGTKIEIADIEAKDIYRYWSRGEKEKVLNYARQDAINTYLIAKELLPMHYELSKMIRLPVDDVTRMGRGKQVDWLLLSEAKKIGEIAPNPPEHAESYEGAFVLEPERGLHENVACLDFASMYPSIMIAFNISPDTYGCRDDCYEAPEVGHKFRKSPDGFFKRILRMLIEKRRELKVELKNLSPESSEYKLLDIKQQTLKVLTNSFYGYMGWNLARWYCHPCAEATTAWGRHFIRTSAKIAESMGFKVLYGDTDSIFVTKAGMTKEDVDRLIDKLHEELPIQIEVDEYYSAIFFVEKKRYAGLTEDGRLVVKGLEVRRGDWCELAKKVQREVIEVILKEKNPEKALSLVKDVILRIKEGKVSLEEVVIYKGLTKKPSKYESMQAHVKAALKAREMGIIYPVSSKIGYVIVKGSGNIGDRAYPIDLIEDFDGENLRIKTKSGIEIKKLDKDYYIDNQIIPSVLRILERFGYTEASLKGSSQMSLDSFFS</sequence>
<organism>
    <name type="scientific">Archaeoglobus fulgidus (strain ATCC 49558 / DSM 4304 / JCM 9628 / NBRC 100126 / VC-16)</name>
    <dbReference type="NCBI Taxonomy" id="224325"/>
    <lineage>
        <taxon>Archaea</taxon>
        <taxon>Methanobacteriati</taxon>
        <taxon>Methanobacteriota</taxon>
        <taxon>Archaeoglobi</taxon>
        <taxon>Archaeoglobales</taxon>
        <taxon>Archaeoglobaceae</taxon>
        <taxon>Archaeoglobus</taxon>
    </lineage>
</organism>
<comment type="catalytic activity">
    <reaction>
        <text>DNA(n) + a 2'-deoxyribonucleoside 5'-triphosphate = DNA(n+1) + diphosphate</text>
        <dbReference type="Rhea" id="RHEA:22508"/>
        <dbReference type="Rhea" id="RHEA-COMP:17339"/>
        <dbReference type="Rhea" id="RHEA-COMP:17340"/>
        <dbReference type="ChEBI" id="CHEBI:33019"/>
        <dbReference type="ChEBI" id="CHEBI:61560"/>
        <dbReference type="ChEBI" id="CHEBI:173112"/>
        <dbReference type="EC" id="2.7.7.7"/>
    </reaction>
</comment>
<comment type="similarity">
    <text evidence="1">Belongs to the DNA polymerase type-B family.</text>
</comment>
<gene>
    <name type="primary">pol</name>
    <name type="synonym">polB</name>
    <name type="ordered locus">AF_0497</name>
</gene>
<dbReference type="EC" id="2.7.7.7"/>
<dbReference type="EMBL" id="AE000782">
    <property type="protein sequence ID" value="AAB90741.1"/>
    <property type="molecule type" value="Genomic_DNA"/>
</dbReference>
<dbReference type="PIR" id="A69312">
    <property type="entry name" value="A69312"/>
</dbReference>
<dbReference type="RefSeq" id="WP_010878004.1">
    <property type="nucleotide sequence ID" value="NC_000917.1"/>
</dbReference>
<dbReference type="SMR" id="O29753"/>
<dbReference type="STRING" id="224325.AF_0497"/>
<dbReference type="PaxDb" id="224325-AF_0497"/>
<dbReference type="EnsemblBacteria" id="AAB90741">
    <property type="protein sequence ID" value="AAB90741"/>
    <property type="gene ID" value="AF_0497"/>
</dbReference>
<dbReference type="KEGG" id="afu:AF_0497"/>
<dbReference type="eggNOG" id="arCOG00328">
    <property type="taxonomic scope" value="Archaea"/>
</dbReference>
<dbReference type="HOGENOM" id="CLU_000203_6_0_2"/>
<dbReference type="OrthoDB" id="323192at2157"/>
<dbReference type="PhylomeDB" id="O29753"/>
<dbReference type="BRENDA" id="2.7.7.7">
    <property type="organism ID" value="414"/>
</dbReference>
<dbReference type="Proteomes" id="UP000002199">
    <property type="component" value="Chromosome"/>
</dbReference>
<dbReference type="GO" id="GO:0003677">
    <property type="term" value="F:DNA binding"/>
    <property type="evidence" value="ECO:0007669"/>
    <property type="project" value="UniProtKB-KW"/>
</dbReference>
<dbReference type="GO" id="GO:0003887">
    <property type="term" value="F:DNA-directed DNA polymerase activity"/>
    <property type="evidence" value="ECO:0007669"/>
    <property type="project" value="UniProtKB-KW"/>
</dbReference>
<dbReference type="GO" id="GO:0000166">
    <property type="term" value="F:nucleotide binding"/>
    <property type="evidence" value="ECO:0007669"/>
    <property type="project" value="InterPro"/>
</dbReference>
<dbReference type="GO" id="GO:0006261">
    <property type="term" value="P:DNA-templated DNA replication"/>
    <property type="evidence" value="ECO:0007669"/>
    <property type="project" value="TreeGrafter"/>
</dbReference>
<dbReference type="CDD" id="cd05781">
    <property type="entry name" value="DNA_polB_B3_exo"/>
    <property type="match status" value="1"/>
</dbReference>
<dbReference type="CDD" id="cd05536">
    <property type="entry name" value="POLBc_B3"/>
    <property type="match status" value="1"/>
</dbReference>
<dbReference type="Gene3D" id="1.10.132.60">
    <property type="entry name" value="DNA polymerase family B, C-terminal domain"/>
    <property type="match status" value="1"/>
</dbReference>
<dbReference type="Gene3D" id="3.30.342.10">
    <property type="entry name" value="DNA Polymerase, chain B, domain 1"/>
    <property type="match status" value="1"/>
</dbReference>
<dbReference type="Gene3D" id="1.10.287.690">
    <property type="entry name" value="Helix hairpin bin"/>
    <property type="match status" value="1"/>
</dbReference>
<dbReference type="Gene3D" id="3.90.1600.10">
    <property type="entry name" value="Palm domain of DNA polymerase"/>
    <property type="match status" value="1"/>
</dbReference>
<dbReference type="Gene3D" id="3.30.420.10">
    <property type="entry name" value="Ribonuclease H-like superfamily/Ribonuclease H"/>
    <property type="match status" value="1"/>
</dbReference>
<dbReference type="InterPro" id="IPR006172">
    <property type="entry name" value="DNA-dir_DNA_pol_B"/>
</dbReference>
<dbReference type="InterPro" id="IPR017964">
    <property type="entry name" value="DNA-dir_DNA_pol_B_CS"/>
</dbReference>
<dbReference type="InterPro" id="IPR006133">
    <property type="entry name" value="DNA-dir_DNA_pol_B_exonuc"/>
</dbReference>
<dbReference type="InterPro" id="IPR006134">
    <property type="entry name" value="DNA-dir_DNA_pol_B_multi_dom"/>
</dbReference>
<dbReference type="InterPro" id="IPR043502">
    <property type="entry name" value="DNA/RNA_pol_sf"/>
</dbReference>
<dbReference type="InterPro" id="IPR042087">
    <property type="entry name" value="DNA_pol_B_thumb"/>
</dbReference>
<dbReference type="InterPro" id="IPR023211">
    <property type="entry name" value="DNA_pol_palm_dom_sf"/>
</dbReference>
<dbReference type="InterPro" id="IPR050240">
    <property type="entry name" value="DNA_pol_type-B"/>
</dbReference>
<dbReference type="InterPro" id="IPR012337">
    <property type="entry name" value="RNaseH-like_sf"/>
</dbReference>
<dbReference type="InterPro" id="IPR036397">
    <property type="entry name" value="RNaseH_sf"/>
</dbReference>
<dbReference type="NCBIfam" id="TIGR00592">
    <property type="entry name" value="pol2"/>
    <property type="match status" value="1"/>
</dbReference>
<dbReference type="PANTHER" id="PTHR10322">
    <property type="entry name" value="DNA POLYMERASE CATALYTIC SUBUNIT"/>
    <property type="match status" value="1"/>
</dbReference>
<dbReference type="PANTHER" id="PTHR10322:SF23">
    <property type="entry name" value="DNA POLYMERASE DELTA CATALYTIC SUBUNIT"/>
    <property type="match status" value="1"/>
</dbReference>
<dbReference type="Pfam" id="PF00136">
    <property type="entry name" value="DNA_pol_B"/>
    <property type="match status" value="1"/>
</dbReference>
<dbReference type="Pfam" id="PF03104">
    <property type="entry name" value="DNA_pol_B_exo1"/>
    <property type="match status" value="1"/>
</dbReference>
<dbReference type="PRINTS" id="PR00106">
    <property type="entry name" value="DNAPOLB"/>
</dbReference>
<dbReference type="SMART" id="SM00486">
    <property type="entry name" value="POLBc"/>
    <property type="match status" value="1"/>
</dbReference>
<dbReference type="SUPFAM" id="SSF56672">
    <property type="entry name" value="DNA/RNA polymerases"/>
    <property type="match status" value="1"/>
</dbReference>
<dbReference type="SUPFAM" id="SSF53098">
    <property type="entry name" value="Ribonuclease H-like"/>
    <property type="match status" value="1"/>
</dbReference>
<dbReference type="PROSITE" id="PS00116">
    <property type="entry name" value="DNA_POLYMERASE_B"/>
    <property type="match status" value="1"/>
</dbReference>
<evidence type="ECO:0000305" key="1"/>
<accession>O29753</accession>
<protein>
    <recommendedName>
        <fullName>DNA polymerase</fullName>
        <ecNumber>2.7.7.7</ecNumber>
    </recommendedName>
</protein>
<name>DPOL_ARCFU</name>
<proteinExistence type="inferred from homology"/>